<organism>
    <name type="scientific">Clostridium botulinum (strain 657 / Type Ba4)</name>
    <dbReference type="NCBI Taxonomy" id="515621"/>
    <lineage>
        <taxon>Bacteria</taxon>
        <taxon>Bacillati</taxon>
        <taxon>Bacillota</taxon>
        <taxon>Clostridia</taxon>
        <taxon>Eubacteriales</taxon>
        <taxon>Clostridiaceae</taxon>
        <taxon>Clostridium</taxon>
    </lineage>
</organism>
<sequence length="206" mass="22880">MPKVDLFNQNGEKVGDLQLADSVFGVEVNTYAMHQVVKALLANKRQGTQSAKTRAEVSGGGIKPWRQKGTGRARQGSIRAPQWIHGGIVFAPKPRDYRMSIPKSMKKVAIKSALTSKVNEKLMVVVDDIKLETPKTKEVVKMLNAFNAKKTLIITNNAEENVYKSARNIEGVQIIPVNNINVYDILKYDKVVITKDAVSKIEEVYA</sequence>
<gene>
    <name evidence="1" type="primary">rplD</name>
    <name type="ordered locus">CLJ_B3788</name>
</gene>
<keyword id="KW-0687">Ribonucleoprotein</keyword>
<keyword id="KW-0689">Ribosomal protein</keyword>
<keyword id="KW-0694">RNA-binding</keyword>
<keyword id="KW-0699">rRNA-binding</keyword>
<evidence type="ECO:0000255" key="1">
    <source>
        <dbReference type="HAMAP-Rule" id="MF_01328"/>
    </source>
</evidence>
<evidence type="ECO:0000256" key="2">
    <source>
        <dbReference type="SAM" id="MobiDB-lite"/>
    </source>
</evidence>
<evidence type="ECO:0000305" key="3"/>
<proteinExistence type="inferred from homology"/>
<feature type="chain" id="PRO_1000214563" description="Large ribosomal subunit protein uL4">
    <location>
        <begin position="1"/>
        <end position="206"/>
    </location>
</feature>
<feature type="region of interest" description="Disordered" evidence="2">
    <location>
        <begin position="47"/>
        <end position="75"/>
    </location>
</feature>
<reference key="1">
    <citation type="submission" date="2008-05" db="EMBL/GenBank/DDBJ databases">
        <title>Genome sequence of Clostridium botulinum Ba4 strain 657.</title>
        <authorList>
            <person name="Shrivastava S."/>
            <person name="Brown J.L."/>
            <person name="Bruce D."/>
            <person name="Detter C."/>
            <person name="Munk C."/>
            <person name="Smith L.A."/>
            <person name="Smith T.J."/>
            <person name="Sutton G."/>
            <person name="Brettin T.S."/>
        </authorList>
    </citation>
    <scope>NUCLEOTIDE SEQUENCE [LARGE SCALE GENOMIC DNA]</scope>
    <source>
        <strain>657 / Type Ba4</strain>
    </source>
</reference>
<dbReference type="EMBL" id="CP001083">
    <property type="protein sequence ID" value="ACQ52681.1"/>
    <property type="molecule type" value="Genomic_DNA"/>
</dbReference>
<dbReference type="RefSeq" id="WP_003360193.1">
    <property type="nucleotide sequence ID" value="NC_012658.1"/>
</dbReference>
<dbReference type="SMR" id="C3KVQ0"/>
<dbReference type="KEGG" id="cbi:CLJ_B3788"/>
<dbReference type="HOGENOM" id="CLU_041575_5_2_9"/>
<dbReference type="Proteomes" id="UP000002333">
    <property type="component" value="Chromosome"/>
</dbReference>
<dbReference type="GO" id="GO:1990904">
    <property type="term" value="C:ribonucleoprotein complex"/>
    <property type="evidence" value="ECO:0007669"/>
    <property type="project" value="UniProtKB-KW"/>
</dbReference>
<dbReference type="GO" id="GO:0005840">
    <property type="term" value="C:ribosome"/>
    <property type="evidence" value="ECO:0007669"/>
    <property type="project" value="UniProtKB-KW"/>
</dbReference>
<dbReference type="GO" id="GO:0019843">
    <property type="term" value="F:rRNA binding"/>
    <property type="evidence" value="ECO:0007669"/>
    <property type="project" value="UniProtKB-UniRule"/>
</dbReference>
<dbReference type="GO" id="GO:0003735">
    <property type="term" value="F:structural constituent of ribosome"/>
    <property type="evidence" value="ECO:0007669"/>
    <property type="project" value="InterPro"/>
</dbReference>
<dbReference type="GO" id="GO:0006412">
    <property type="term" value="P:translation"/>
    <property type="evidence" value="ECO:0007669"/>
    <property type="project" value="UniProtKB-UniRule"/>
</dbReference>
<dbReference type="FunFam" id="3.40.1370.10:FF:000003">
    <property type="entry name" value="50S ribosomal protein L4"/>
    <property type="match status" value="1"/>
</dbReference>
<dbReference type="Gene3D" id="3.40.1370.10">
    <property type="match status" value="1"/>
</dbReference>
<dbReference type="HAMAP" id="MF_01328_B">
    <property type="entry name" value="Ribosomal_uL4_B"/>
    <property type="match status" value="1"/>
</dbReference>
<dbReference type="InterPro" id="IPR002136">
    <property type="entry name" value="Ribosomal_uL4"/>
</dbReference>
<dbReference type="InterPro" id="IPR013005">
    <property type="entry name" value="Ribosomal_uL4-like"/>
</dbReference>
<dbReference type="InterPro" id="IPR023574">
    <property type="entry name" value="Ribosomal_uL4_dom_sf"/>
</dbReference>
<dbReference type="NCBIfam" id="TIGR03953">
    <property type="entry name" value="rplD_bact"/>
    <property type="match status" value="1"/>
</dbReference>
<dbReference type="PANTHER" id="PTHR10746">
    <property type="entry name" value="50S RIBOSOMAL PROTEIN L4"/>
    <property type="match status" value="1"/>
</dbReference>
<dbReference type="PANTHER" id="PTHR10746:SF6">
    <property type="entry name" value="LARGE RIBOSOMAL SUBUNIT PROTEIN UL4M"/>
    <property type="match status" value="1"/>
</dbReference>
<dbReference type="Pfam" id="PF00573">
    <property type="entry name" value="Ribosomal_L4"/>
    <property type="match status" value="1"/>
</dbReference>
<dbReference type="SUPFAM" id="SSF52166">
    <property type="entry name" value="Ribosomal protein L4"/>
    <property type="match status" value="1"/>
</dbReference>
<comment type="function">
    <text evidence="1">One of the primary rRNA binding proteins, this protein initially binds near the 5'-end of the 23S rRNA. It is important during the early stages of 50S assembly. It makes multiple contacts with different domains of the 23S rRNA in the assembled 50S subunit and ribosome.</text>
</comment>
<comment type="function">
    <text evidence="1">Forms part of the polypeptide exit tunnel.</text>
</comment>
<comment type="subunit">
    <text evidence="1">Part of the 50S ribosomal subunit.</text>
</comment>
<comment type="similarity">
    <text evidence="1">Belongs to the universal ribosomal protein uL4 family.</text>
</comment>
<accession>C3KVQ0</accession>
<name>RL4_CLOB6</name>
<protein>
    <recommendedName>
        <fullName evidence="1">Large ribosomal subunit protein uL4</fullName>
    </recommendedName>
    <alternativeName>
        <fullName evidence="3">50S ribosomal protein L4</fullName>
    </alternativeName>
</protein>